<name>MURD_CAMJ8</name>
<keyword id="KW-0067">ATP-binding</keyword>
<keyword id="KW-0131">Cell cycle</keyword>
<keyword id="KW-0132">Cell division</keyword>
<keyword id="KW-0133">Cell shape</keyword>
<keyword id="KW-0961">Cell wall biogenesis/degradation</keyword>
<keyword id="KW-0963">Cytoplasm</keyword>
<keyword id="KW-0436">Ligase</keyword>
<keyword id="KW-0547">Nucleotide-binding</keyword>
<keyword id="KW-0573">Peptidoglycan synthesis</keyword>
<proteinExistence type="inferred from homology"/>
<sequence length="402" mass="45423">MKISLFGYGKTTRAIAENLVDKFGPFDIYDDHFTETKKDTLGNLLLNPNDFDDNLSDIEIPSPGFPPKHKLIQKAKNLQSEYDFFYDIMPKSVWISGTNGKTTTTQMATHLLSHIGAVIGGNVGTPLAELDPYAKLWILETSSFTLHYTHKAKPEIYALLPISPDHLSWHGSFDNYVQDKLSVLKRMNECDVVILPKIYANTPTKAHKISYKDEKDLAVKFGIDTEKISFKSPFLLDAIMALAIEKILLDTLSYELLNSFVMEKNKLEELKDSQNRLWVNDTKATNESAVMAALNRYKDKKIHLIIGGDDKGVDLSNLFDFMKNFNIELYAIGISTEKMLDYAKKANLKAYKCEVLSKAVNEISNHLRVNEVALLSPACASLDQFNSYVERGKVFKECVNKI</sequence>
<gene>
    <name evidence="1" type="primary">murD</name>
    <name type="ordered locus">C8J_0407</name>
</gene>
<protein>
    <recommendedName>
        <fullName evidence="1">UDP-N-acetylmuramoylalanine--D-glutamate ligase</fullName>
        <ecNumber evidence="1">6.3.2.9</ecNumber>
    </recommendedName>
    <alternativeName>
        <fullName evidence="1">D-glutamic acid-adding enzyme</fullName>
    </alternativeName>
    <alternativeName>
        <fullName evidence="1">UDP-N-acetylmuramoyl-L-alanyl-D-glutamate synthetase</fullName>
    </alternativeName>
</protein>
<dbReference type="EC" id="6.3.2.9" evidence="1"/>
<dbReference type="EMBL" id="CP000814">
    <property type="protein sequence ID" value="ABV52006.1"/>
    <property type="molecule type" value="Genomic_DNA"/>
</dbReference>
<dbReference type="RefSeq" id="WP_002867006.1">
    <property type="nucleotide sequence ID" value="NC_009839.1"/>
</dbReference>
<dbReference type="SMR" id="A8FKL9"/>
<dbReference type="KEGG" id="cju:C8J_0407"/>
<dbReference type="HOGENOM" id="CLU_032540_2_0_7"/>
<dbReference type="UniPathway" id="UPA00219"/>
<dbReference type="GO" id="GO:0005737">
    <property type="term" value="C:cytoplasm"/>
    <property type="evidence" value="ECO:0007669"/>
    <property type="project" value="UniProtKB-SubCell"/>
</dbReference>
<dbReference type="GO" id="GO:0005524">
    <property type="term" value="F:ATP binding"/>
    <property type="evidence" value="ECO:0007669"/>
    <property type="project" value="UniProtKB-UniRule"/>
</dbReference>
<dbReference type="GO" id="GO:0008764">
    <property type="term" value="F:UDP-N-acetylmuramoylalanine-D-glutamate ligase activity"/>
    <property type="evidence" value="ECO:0007669"/>
    <property type="project" value="UniProtKB-UniRule"/>
</dbReference>
<dbReference type="GO" id="GO:0051301">
    <property type="term" value="P:cell division"/>
    <property type="evidence" value="ECO:0007669"/>
    <property type="project" value="UniProtKB-KW"/>
</dbReference>
<dbReference type="GO" id="GO:0071555">
    <property type="term" value="P:cell wall organization"/>
    <property type="evidence" value="ECO:0007669"/>
    <property type="project" value="UniProtKB-KW"/>
</dbReference>
<dbReference type="GO" id="GO:0009252">
    <property type="term" value="P:peptidoglycan biosynthetic process"/>
    <property type="evidence" value="ECO:0007669"/>
    <property type="project" value="UniProtKB-UniRule"/>
</dbReference>
<dbReference type="GO" id="GO:0008360">
    <property type="term" value="P:regulation of cell shape"/>
    <property type="evidence" value="ECO:0007669"/>
    <property type="project" value="UniProtKB-KW"/>
</dbReference>
<dbReference type="Gene3D" id="3.90.190.20">
    <property type="entry name" value="Mur ligase, C-terminal domain"/>
    <property type="match status" value="1"/>
</dbReference>
<dbReference type="Gene3D" id="3.40.1190.10">
    <property type="entry name" value="Mur-like, catalytic domain"/>
    <property type="match status" value="1"/>
</dbReference>
<dbReference type="HAMAP" id="MF_00639">
    <property type="entry name" value="MurD"/>
    <property type="match status" value="1"/>
</dbReference>
<dbReference type="InterPro" id="IPR036565">
    <property type="entry name" value="Mur-like_cat_sf"/>
</dbReference>
<dbReference type="InterPro" id="IPR036615">
    <property type="entry name" value="Mur_ligase_C_dom_sf"/>
</dbReference>
<dbReference type="InterPro" id="IPR013221">
    <property type="entry name" value="Mur_ligase_cen"/>
</dbReference>
<dbReference type="InterPro" id="IPR005762">
    <property type="entry name" value="MurD"/>
</dbReference>
<dbReference type="NCBIfam" id="TIGR01087">
    <property type="entry name" value="murD"/>
    <property type="match status" value="1"/>
</dbReference>
<dbReference type="PANTHER" id="PTHR43692">
    <property type="entry name" value="UDP-N-ACETYLMURAMOYLALANINE--D-GLUTAMATE LIGASE"/>
    <property type="match status" value="1"/>
</dbReference>
<dbReference type="PANTHER" id="PTHR43692:SF1">
    <property type="entry name" value="UDP-N-ACETYLMURAMOYLALANINE--D-GLUTAMATE LIGASE"/>
    <property type="match status" value="1"/>
</dbReference>
<dbReference type="Pfam" id="PF08245">
    <property type="entry name" value="Mur_ligase_M"/>
    <property type="match status" value="1"/>
</dbReference>
<dbReference type="SUPFAM" id="SSF53623">
    <property type="entry name" value="MurD-like peptide ligases, catalytic domain"/>
    <property type="match status" value="1"/>
</dbReference>
<dbReference type="SUPFAM" id="SSF53244">
    <property type="entry name" value="MurD-like peptide ligases, peptide-binding domain"/>
    <property type="match status" value="1"/>
</dbReference>
<reference key="1">
    <citation type="journal article" date="2007" name="J. Bacteriol.">
        <title>The complete genome sequence of Campylobacter jejuni strain 81116 (NCTC11828).</title>
        <authorList>
            <person name="Pearson B.M."/>
            <person name="Gaskin D.J.H."/>
            <person name="Segers R.P.A.M."/>
            <person name="Wells J.M."/>
            <person name="Nuijten P.J.M."/>
            <person name="van Vliet A.H.M."/>
        </authorList>
    </citation>
    <scope>NUCLEOTIDE SEQUENCE [LARGE SCALE GENOMIC DNA]</scope>
    <source>
        <strain>81116 / NCTC 11828</strain>
    </source>
</reference>
<evidence type="ECO:0000255" key="1">
    <source>
        <dbReference type="HAMAP-Rule" id="MF_00639"/>
    </source>
</evidence>
<accession>A8FKL9</accession>
<feature type="chain" id="PRO_1000072681" description="UDP-N-acetylmuramoylalanine--D-glutamate ligase">
    <location>
        <begin position="1"/>
        <end position="402"/>
    </location>
</feature>
<feature type="binding site" evidence="1">
    <location>
        <begin position="97"/>
        <end position="103"/>
    </location>
    <ligand>
        <name>ATP</name>
        <dbReference type="ChEBI" id="CHEBI:30616"/>
    </ligand>
</feature>
<comment type="function">
    <text evidence="1">Cell wall formation. Catalyzes the addition of glutamate to the nucleotide precursor UDP-N-acetylmuramoyl-L-alanine (UMA).</text>
</comment>
<comment type="catalytic activity">
    <reaction evidence="1">
        <text>UDP-N-acetyl-alpha-D-muramoyl-L-alanine + D-glutamate + ATP = UDP-N-acetyl-alpha-D-muramoyl-L-alanyl-D-glutamate + ADP + phosphate + H(+)</text>
        <dbReference type="Rhea" id="RHEA:16429"/>
        <dbReference type="ChEBI" id="CHEBI:15378"/>
        <dbReference type="ChEBI" id="CHEBI:29986"/>
        <dbReference type="ChEBI" id="CHEBI:30616"/>
        <dbReference type="ChEBI" id="CHEBI:43474"/>
        <dbReference type="ChEBI" id="CHEBI:83898"/>
        <dbReference type="ChEBI" id="CHEBI:83900"/>
        <dbReference type="ChEBI" id="CHEBI:456216"/>
        <dbReference type="EC" id="6.3.2.9"/>
    </reaction>
</comment>
<comment type="pathway">
    <text evidence="1">Cell wall biogenesis; peptidoglycan biosynthesis.</text>
</comment>
<comment type="subcellular location">
    <subcellularLocation>
        <location evidence="1">Cytoplasm</location>
    </subcellularLocation>
</comment>
<comment type="similarity">
    <text evidence="1">Belongs to the MurCDEF family.</text>
</comment>
<organism>
    <name type="scientific">Campylobacter jejuni subsp. jejuni serotype O:6 (strain 81116 / NCTC 11828)</name>
    <dbReference type="NCBI Taxonomy" id="407148"/>
    <lineage>
        <taxon>Bacteria</taxon>
        <taxon>Pseudomonadati</taxon>
        <taxon>Campylobacterota</taxon>
        <taxon>Epsilonproteobacteria</taxon>
        <taxon>Campylobacterales</taxon>
        <taxon>Campylobacteraceae</taxon>
        <taxon>Campylobacter</taxon>
    </lineage>
</organism>